<gene>
    <name evidence="1" type="primary">purC</name>
    <name type="ordered locus">CLD_1663</name>
</gene>
<accession>B1IL61</accession>
<name>PUR7_CLOBK</name>
<dbReference type="EC" id="6.3.2.6" evidence="1"/>
<dbReference type="EMBL" id="CP000939">
    <property type="protein sequence ID" value="ACA45706.1"/>
    <property type="molecule type" value="Genomic_DNA"/>
</dbReference>
<dbReference type="RefSeq" id="WP_015957931.1">
    <property type="nucleotide sequence ID" value="NC_010516.1"/>
</dbReference>
<dbReference type="SMR" id="B1IL61"/>
<dbReference type="KEGG" id="cbb:CLD_1663"/>
<dbReference type="HOGENOM" id="CLU_061495_2_0_9"/>
<dbReference type="UniPathway" id="UPA00074">
    <property type="reaction ID" value="UER00131"/>
</dbReference>
<dbReference type="Proteomes" id="UP000008541">
    <property type="component" value="Chromosome"/>
</dbReference>
<dbReference type="GO" id="GO:0005524">
    <property type="term" value="F:ATP binding"/>
    <property type="evidence" value="ECO:0007669"/>
    <property type="project" value="UniProtKB-KW"/>
</dbReference>
<dbReference type="GO" id="GO:0004639">
    <property type="term" value="F:phosphoribosylaminoimidazolesuccinocarboxamide synthase activity"/>
    <property type="evidence" value="ECO:0007669"/>
    <property type="project" value="UniProtKB-UniRule"/>
</dbReference>
<dbReference type="GO" id="GO:0006189">
    <property type="term" value="P:'de novo' IMP biosynthetic process"/>
    <property type="evidence" value="ECO:0007669"/>
    <property type="project" value="UniProtKB-UniRule"/>
</dbReference>
<dbReference type="GO" id="GO:0009236">
    <property type="term" value="P:cobalamin biosynthetic process"/>
    <property type="evidence" value="ECO:0007669"/>
    <property type="project" value="InterPro"/>
</dbReference>
<dbReference type="CDD" id="cd01415">
    <property type="entry name" value="SAICAR_synt_PurC"/>
    <property type="match status" value="1"/>
</dbReference>
<dbReference type="FunFam" id="3.30.200.20:FF:000189">
    <property type="entry name" value="Phosphoribosylaminoimidazole-succinocarboxamide synthase"/>
    <property type="match status" value="1"/>
</dbReference>
<dbReference type="FunFam" id="3.30.470.20:FF:000006">
    <property type="entry name" value="Phosphoribosylaminoimidazole-succinocarboxamide synthase"/>
    <property type="match status" value="1"/>
</dbReference>
<dbReference type="Gene3D" id="3.30.470.20">
    <property type="entry name" value="ATP-grasp fold, B domain"/>
    <property type="match status" value="1"/>
</dbReference>
<dbReference type="Gene3D" id="3.30.200.20">
    <property type="entry name" value="Phosphorylase Kinase, domain 1"/>
    <property type="match status" value="1"/>
</dbReference>
<dbReference type="HAMAP" id="MF_00137">
    <property type="entry name" value="SAICAR_synth"/>
    <property type="match status" value="1"/>
</dbReference>
<dbReference type="InterPro" id="IPR028923">
    <property type="entry name" value="SAICAR_synt/ADE2_N"/>
</dbReference>
<dbReference type="InterPro" id="IPR033934">
    <property type="entry name" value="SAICAR_synt_PurC"/>
</dbReference>
<dbReference type="InterPro" id="IPR001636">
    <property type="entry name" value="SAICAR_synth"/>
</dbReference>
<dbReference type="InterPro" id="IPR050089">
    <property type="entry name" value="SAICAR_synthetase"/>
</dbReference>
<dbReference type="InterPro" id="IPR018236">
    <property type="entry name" value="SAICAR_synthetase_CS"/>
</dbReference>
<dbReference type="NCBIfam" id="TIGR00081">
    <property type="entry name" value="purC"/>
    <property type="match status" value="1"/>
</dbReference>
<dbReference type="PANTHER" id="PTHR43599">
    <property type="entry name" value="MULTIFUNCTIONAL PROTEIN ADE2"/>
    <property type="match status" value="1"/>
</dbReference>
<dbReference type="PANTHER" id="PTHR43599:SF3">
    <property type="entry name" value="SI:DKEY-6E2.2"/>
    <property type="match status" value="1"/>
</dbReference>
<dbReference type="Pfam" id="PF01259">
    <property type="entry name" value="SAICAR_synt"/>
    <property type="match status" value="1"/>
</dbReference>
<dbReference type="SUPFAM" id="SSF56104">
    <property type="entry name" value="SAICAR synthase-like"/>
    <property type="match status" value="1"/>
</dbReference>
<dbReference type="PROSITE" id="PS01057">
    <property type="entry name" value="SAICAR_SYNTHETASE_1"/>
    <property type="match status" value="1"/>
</dbReference>
<dbReference type="PROSITE" id="PS01058">
    <property type="entry name" value="SAICAR_SYNTHETASE_2"/>
    <property type="match status" value="1"/>
</dbReference>
<protein>
    <recommendedName>
        <fullName evidence="1">Phosphoribosylaminoimidazole-succinocarboxamide synthase</fullName>
        <ecNumber evidence="1">6.3.2.6</ecNumber>
    </recommendedName>
    <alternativeName>
        <fullName evidence="1">SAICAR synthetase</fullName>
    </alternativeName>
</protein>
<organism>
    <name type="scientific">Clostridium botulinum (strain Okra / Type B1)</name>
    <dbReference type="NCBI Taxonomy" id="498213"/>
    <lineage>
        <taxon>Bacteria</taxon>
        <taxon>Bacillati</taxon>
        <taxon>Bacillota</taxon>
        <taxon>Clostridia</taxon>
        <taxon>Eubacteriales</taxon>
        <taxon>Clostridiaceae</taxon>
        <taxon>Clostridium</taxon>
    </lineage>
</organism>
<comment type="catalytic activity">
    <reaction evidence="1">
        <text>5-amino-1-(5-phospho-D-ribosyl)imidazole-4-carboxylate + L-aspartate + ATP = (2S)-2-[5-amino-1-(5-phospho-beta-D-ribosyl)imidazole-4-carboxamido]succinate + ADP + phosphate + 2 H(+)</text>
        <dbReference type="Rhea" id="RHEA:22628"/>
        <dbReference type="ChEBI" id="CHEBI:15378"/>
        <dbReference type="ChEBI" id="CHEBI:29991"/>
        <dbReference type="ChEBI" id="CHEBI:30616"/>
        <dbReference type="ChEBI" id="CHEBI:43474"/>
        <dbReference type="ChEBI" id="CHEBI:58443"/>
        <dbReference type="ChEBI" id="CHEBI:77657"/>
        <dbReference type="ChEBI" id="CHEBI:456216"/>
        <dbReference type="EC" id="6.3.2.6"/>
    </reaction>
</comment>
<comment type="pathway">
    <text evidence="1">Purine metabolism; IMP biosynthesis via de novo pathway; 5-amino-1-(5-phospho-D-ribosyl)imidazole-4-carboxamide from 5-amino-1-(5-phospho-D-ribosyl)imidazole-4-carboxylate: step 1/2.</text>
</comment>
<comment type="similarity">
    <text evidence="1">Belongs to the SAICAR synthetase family.</text>
</comment>
<proteinExistence type="inferred from homology"/>
<feature type="chain" id="PRO_1000095975" description="Phosphoribosylaminoimidazole-succinocarboxamide synthase">
    <location>
        <begin position="1"/>
        <end position="234"/>
    </location>
</feature>
<sequence>MEKKDMLYEGKAKKIFGTDDKDTVVVYYKDDATAFNGEKKGTIEDKGVMNNSITAMLFELLEKKGVKTHFIEKINEREQLCKKVEIVPLEVIVRNIAAGSMAKRLGLSEGRKLDTTVFEISYKNDDLNDPLINDYHAVAIGLTTFAELKEMYSIAEKVNNTLKEFFDEQGINLVDFKIEIGRFNGELLLADEISPDTCRLWDKSTGEKLDKDRFRRDMGNVKEAYMEILKRVNK</sequence>
<reference key="1">
    <citation type="journal article" date="2007" name="PLoS ONE">
        <title>Analysis of the neurotoxin complex genes in Clostridium botulinum A1-A4 and B1 strains: BoNT/A3, /Ba4 and /B1 clusters are located within plasmids.</title>
        <authorList>
            <person name="Smith T.J."/>
            <person name="Hill K.K."/>
            <person name="Foley B.T."/>
            <person name="Detter J.C."/>
            <person name="Munk A.C."/>
            <person name="Bruce D.C."/>
            <person name="Doggett N.A."/>
            <person name="Smith L.A."/>
            <person name="Marks J.D."/>
            <person name="Xie G."/>
            <person name="Brettin T.S."/>
        </authorList>
    </citation>
    <scope>NUCLEOTIDE SEQUENCE [LARGE SCALE GENOMIC DNA]</scope>
    <source>
        <strain>Okra / Type B1</strain>
    </source>
</reference>
<keyword id="KW-0067">ATP-binding</keyword>
<keyword id="KW-0436">Ligase</keyword>
<keyword id="KW-0547">Nucleotide-binding</keyword>
<keyword id="KW-0658">Purine biosynthesis</keyword>
<evidence type="ECO:0000255" key="1">
    <source>
        <dbReference type="HAMAP-Rule" id="MF_00137"/>
    </source>
</evidence>